<protein>
    <recommendedName>
        <fullName>mRNA export factor ICP27 homolog</fullName>
    </recommendedName>
    <alternativeName>
        <fullName>Mta</fullName>
    </alternativeName>
    <alternativeName>
        <fullName>ORF57 protein homolog</fullName>
    </alternativeName>
    <alternativeName>
        <fullName evidence="2">Protein EB2</fullName>
    </alternativeName>
    <alternativeName>
        <fullName>Protein SM</fullName>
    </alternativeName>
</protein>
<name>ICP27_EBVG</name>
<gene>
    <name type="ORF">BMLF1</name>
</gene>
<gene>
    <name type="ORF">BSLF2</name>
</gene>
<proteinExistence type="evidence at protein level"/>
<organismHost>
    <name type="scientific">Homo sapiens</name>
    <name type="common">Human</name>
    <dbReference type="NCBI Taxonomy" id="9606"/>
</organismHost>
<dbReference type="EMBL" id="AY961628">
    <property type="protein sequence ID" value="AAY41109.1"/>
    <property type="status" value="ALT_SEQ"/>
    <property type="molecule type" value="Genomic_DNA"/>
</dbReference>
<dbReference type="EMBL" id="AY961628">
    <property type="protein sequence ID" value="AAY41110.1"/>
    <property type="status" value="ALT_SEQ"/>
    <property type="molecule type" value="Genomic_DNA"/>
</dbReference>
<dbReference type="PDB" id="3MRE">
    <property type="method" value="X-ray"/>
    <property type="resolution" value="1.10 A"/>
    <property type="chains" value="P=300-308"/>
</dbReference>
<dbReference type="PDB" id="3MRF">
    <property type="method" value="X-ray"/>
    <property type="resolution" value="2.30 A"/>
    <property type="chains" value="P=300-308"/>
</dbReference>
<dbReference type="PDB" id="3O4L">
    <property type="method" value="X-ray"/>
    <property type="resolution" value="2.54 A"/>
    <property type="chains" value="C=300-308"/>
</dbReference>
<dbReference type="PDBsum" id="3MRE"/>
<dbReference type="PDBsum" id="3MRF"/>
<dbReference type="PDBsum" id="3O4L"/>
<dbReference type="SMR" id="Q3KSU1"/>
<dbReference type="IntAct" id="Q3KSU1">
    <property type="interactions" value="3"/>
</dbReference>
<dbReference type="EvolutionaryTrace" id="Q3KSU1"/>
<dbReference type="Proteomes" id="UP000007641">
    <property type="component" value="Genome"/>
</dbReference>
<dbReference type="GO" id="GO:0030430">
    <property type="term" value="C:host cell cytoplasm"/>
    <property type="evidence" value="ECO:0007669"/>
    <property type="project" value="UniProtKB-SubCell"/>
</dbReference>
<dbReference type="GO" id="GO:0042025">
    <property type="term" value="C:host cell nucleus"/>
    <property type="evidence" value="ECO:0007669"/>
    <property type="project" value="UniProtKB-SubCell"/>
</dbReference>
<dbReference type="GO" id="GO:0042802">
    <property type="term" value="F:identical protein binding"/>
    <property type="evidence" value="ECO:0000353"/>
    <property type="project" value="IntAct"/>
</dbReference>
<dbReference type="GO" id="GO:0030291">
    <property type="term" value="F:protein serine/threonine kinase inhibitor activity"/>
    <property type="evidence" value="ECO:0007669"/>
    <property type="project" value="UniProtKB-KW"/>
</dbReference>
<dbReference type="GO" id="GO:0003723">
    <property type="term" value="F:RNA binding"/>
    <property type="evidence" value="ECO:0007669"/>
    <property type="project" value="UniProtKB-KW"/>
</dbReference>
<dbReference type="GO" id="GO:0008270">
    <property type="term" value="F:zinc ion binding"/>
    <property type="evidence" value="ECO:0007669"/>
    <property type="project" value="UniProtKB-KW"/>
</dbReference>
<dbReference type="GO" id="GO:0051028">
    <property type="term" value="P:mRNA transport"/>
    <property type="evidence" value="ECO:0007669"/>
    <property type="project" value="UniProtKB-KW"/>
</dbReference>
<dbReference type="GO" id="GO:0006355">
    <property type="term" value="P:regulation of DNA-templated transcription"/>
    <property type="evidence" value="ECO:0007669"/>
    <property type="project" value="InterPro"/>
</dbReference>
<dbReference type="GO" id="GO:0052170">
    <property type="term" value="P:symbiont-mediated suppression of host innate immune response"/>
    <property type="evidence" value="ECO:0007669"/>
    <property type="project" value="UniProtKB-KW"/>
</dbReference>
<dbReference type="GO" id="GO:0039580">
    <property type="term" value="P:symbiont-mediated suppression of host PKR/eIFalpha signaling"/>
    <property type="evidence" value="ECO:0007669"/>
    <property type="project" value="UniProtKB-KW"/>
</dbReference>
<dbReference type="GO" id="GO:0039502">
    <property type="term" value="P:symbiont-mediated suppression of host type I interferon-mediated signaling pathway"/>
    <property type="evidence" value="ECO:0007669"/>
    <property type="project" value="UniProtKB-KW"/>
</dbReference>
<dbReference type="InterPro" id="IPR008648">
    <property type="entry name" value="ICP27-like"/>
</dbReference>
<dbReference type="Pfam" id="PF05459">
    <property type="entry name" value="Herpes_UL69"/>
    <property type="match status" value="1"/>
</dbReference>
<reference key="1">
    <citation type="journal article" date="2005" name="J. Virol.">
        <title>Genomic sequence analysis of Epstein-Barr virus strain GD1 from a nasopharyngeal carcinoma patient.</title>
        <authorList>
            <person name="Zeng M.-S."/>
            <person name="Li D.-J."/>
            <person name="Liu Q.-L."/>
            <person name="Song L.-B."/>
            <person name="Li M.-Z."/>
            <person name="Zhang R.-H."/>
            <person name="Yu X.-J."/>
            <person name="Wang H.-M."/>
            <person name="Ernberg I."/>
            <person name="Zeng Y.-X."/>
        </authorList>
    </citation>
    <scope>NUCLEOTIDE SEQUENCE [LARGE SCALE GENOMIC DNA]</scope>
</reference>
<sequence>MVPSQRLSRTSSISSNEDPAESHILELEAVSDTNTDCDMDPMEGSEEHSTDGEISSSEEEDEDPTPAHAVPAQPSSVVITPTSASFVIPRKKWDLQDKTVTLHRSPLCRDEDEKEETGNSSYTRGHKRRRGEVHGCTDESYGKRRHLPPGARAPRAPRAPRVPRAPRSPRAPRSNRATRGPRSESRGAGRSTRKQARQERSQRPLPNKPWFDMSLVKPVSKITFVTLPSPLASLTLEPIQDPFLQSMLAVAAHPEIGAWQKVQPRHELRRSYKTLREFFTKSTNKDTWLDARMQAIQNAGLCTLVAMLEETIFWLQEITYHGDLPLAPAEDILLACAMSLSKVILTKLKELAPCFLPNTRDYNFVKQLFYITCATARQNKVVETLSSSYVKQPLCLLAAYAAVAPAYINANCRRRHDEVEFLGHYIKNYNPGTLSSLLTEAVETHTRDCRSASCSRLVRAILSPATGSLGLFFVPGLNQ</sequence>
<evidence type="ECO:0000250" key="1">
    <source>
        <dbReference type="UniProtKB" id="P10238"/>
    </source>
</evidence>
<evidence type="ECO:0000250" key="2">
    <source>
        <dbReference type="UniProtKB" id="Q04360"/>
    </source>
</evidence>
<evidence type="ECO:0000256" key="3">
    <source>
        <dbReference type="SAM" id="MobiDB-lite"/>
    </source>
</evidence>
<evidence type="ECO:0000305" key="4"/>
<accession>Q3KSU1</accession>
<accession>Q3KSU0</accession>
<feature type="chain" id="PRO_0000375954" description="mRNA export factor ICP27 homolog">
    <location>
        <begin position="1"/>
        <end position="479"/>
    </location>
</feature>
<feature type="zinc finger region" description="CHC2-type" evidence="1">
    <location>
        <begin position="354"/>
        <end position="454"/>
    </location>
</feature>
<feature type="region of interest" description="Disordered" evidence="3">
    <location>
        <begin position="1"/>
        <end position="78"/>
    </location>
</feature>
<feature type="region of interest" description="Disordered" evidence="3">
    <location>
        <begin position="92"/>
        <end position="210"/>
    </location>
</feature>
<feature type="compositionally biased region" description="Low complexity" evidence="3">
    <location>
        <begin position="1"/>
        <end position="15"/>
    </location>
</feature>
<feature type="compositionally biased region" description="Acidic residues" evidence="3">
    <location>
        <begin position="35"/>
        <end position="44"/>
    </location>
</feature>
<feature type="compositionally biased region" description="Basic and acidic residues" evidence="3">
    <location>
        <begin position="132"/>
        <end position="142"/>
    </location>
</feature>
<feature type="binding site" evidence="1">
    <location>
        <position position="354"/>
    </location>
    <ligand>
        <name>Zn(2+)</name>
        <dbReference type="ChEBI" id="CHEBI:29105"/>
    </ligand>
</feature>
<feature type="binding site" evidence="1">
    <location>
        <position position="445"/>
    </location>
    <ligand>
        <name>Zn(2+)</name>
        <dbReference type="ChEBI" id="CHEBI:29105"/>
    </ligand>
</feature>
<feature type="binding site" evidence="1">
    <location>
        <position position="449"/>
    </location>
    <ligand>
        <name>Zn(2+)</name>
        <dbReference type="ChEBI" id="CHEBI:29105"/>
    </ligand>
</feature>
<feature type="binding site" evidence="1">
    <location>
        <position position="454"/>
    </location>
    <ligand>
        <name>Zn(2+)</name>
        <dbReference type="ChEBI" id="CHEBI:29105"/>
    </ligand>
</feature>
<organism>
    <name type="scientific">Epstein-Barr virus (strain GD1)</name>
    <name type="common">HHV-4</name>
    <name type="synonym">Human gammaherpesvirus 4</name>
    <dbReference type="NCBI Taxonomy" id="10376"/>
    <lineage>
        <taxon>Viruses</taxon>
        <taxon>Duplodnaviria</taxon>
        <taxon>Heunggongvirae</taxon>
        <taxon>Peploviricota</taxon>
        <taxon>Herviviricetes</taxon>
        <taxon>Herpesvirales</taxon>
        <taxon>Orthoherpesviridae</taxon>
        <taxon>Gammaherpesvirinae</taxon>
        <taxon>Lymphocryptovirus</taxon>
        <taxon>Lymphocryptovirus humangamma4</taxon>
    </lineage>
</organism>
<comment type="function">
    <text evidence="2">Promotes the nuclear export of a subset of early and late viral mRNAs by interacting with mRNAs and cellular export proteins. Additionally may prevent the establishment of cellular antiviral state, by acting as an alternative splicing factor for cellular RNAs such as STAT1, resulting in a STAT1 mRNA incapable of producing the STAT1alpha isoform.</text>
</comment>
<comment type="subunit">
    <text evidence="2">Interacts with host XPO1 and with the XPO1 export pathway components small GTPase RAN and nucleoporin NUP214. Interacts with host SPEN, OTT1 and OTT3. Interacts with host SRSF1, SRSF3, SRSF7 and SRPK1. Interacts with host DHX9; this interaction may have an inhibitory effect on virion production. Interacts (via N-terminus) with host NXF1; this interaction plays a role in mRNA export.</text>
</comment>
<comment type="interaction">
    <interactant intactId="EBI-2621113">
        <id>Q3KSU1</id>
    </interactant>
    <interactant intactId="EBI-2621113">
        <id>Q3KSU1</id>
        <label>BMLF1</label>
    </interactant>
    <organismsDiffer>false</organismsDiffer>
    <experiments>2</experiments>
</comment>
<comment type="subcellular location">
    <subcellularLocation>
        <location evidence="2">Host nucleus</location>
    </subcellularLocation>
    <subcellularLocation>
        <location evidence="2">Host cytoplasm</location>
    </subcellularLocation>
    <text evidence="2">shuttles between the nucleus and the cytoplasm.</text>
</comment>
<comment type="PTM">
    <text evidence="2">Phosphorylated by cellular protein kinase CK2.</text>
</comment>
<comment type="similarity">
    <text evidence="4">Belongs to the HHV-1 ICP27 protein family.</text>
</comment>
<comment type="sequence caution" evidence="4">
    <conflict type="erroneous gene model prediction">
        <sequence resource="EMBL-CDS" id="AAY41109"/>
    </conflict>
    <text>Produced from a longuer mRNA than expected which is spliced so that BSFL2 and BMLF1 ORFs are fused.</text>
</comment>
<comment type="sequence caution" evidence="4">
    <conflict type="erroneous gene model prediction">
        <sequence resource="EMBL-CDS" id="AAY41110"/>
    </conflict>
    <text>Produced from a longuer mRNA than expected which is spliced so that BSFL2 and BMLF1 ORFs are fused.</text>
</comment>
<keyword id="KW-0002">3D-structure</keyword>
<keyword id="KW-0244">Early protein</keyword>
<keyword id="KW-1035">Host cytoplasm</keyword>
<keyword id="KW-1048">Host nucleus</keyword>
<keyword id="KW-0945">Host-virus interaction</keyword>
<keyword id="KW-1090">Inhibition of host innate immune response by virus</keyword>
<keyword id="KW-1114">Inhibition of host interferon signaling pathway by virus</keyword>
<keyword id="KW-1102">Inhibition of host PKR by virus</keyword>
<keyword id="KW-0922">Interferon antiviral system evasion</keyword>
<keyword id="KW-0479">Metal-binding</keyword>
<keyword id="KW-0509">mRNA transport</keyword>
<keyword id="KW-0597">Phosphoprotein</keyword>
<keyword id="KW-0694">RNA-binding</keyword>
<keyword id="KW-0804">Transcription</keyword>
<keyword id="KW-0805">Transcription regulation</keyword>
<keyword id="KW-0813">Transport</keyword>
<keyword id="KW-0899">Viral immunoevasion</keyword>
<keyword id="KW-0862">Zinc</keyword>
<keyword id="KW-0863">Zinc-finger</keyword>